<reference key="1">
    <citation type="journal article" date="2007" name="Science">
        <title>Legumes symbioses: absence of nod genes in photosynthetic bradyrhizobia.</title>
        <authorList>
            <person name="Giraud E."/>
            <person name="Moulin L."/>
            <person name="Vallenet D."/>
            <person name="Barbe V."/>
            <person name="Cytryn E."/>
            <person name="Avarre J.-C."/>
            <person name="Jaubert M."/>
            <person name="Simon D."/>
            <person name="Cartieaux F."/>
            <person name="Prin Y."/>
            <person name="Bena G."/>
            <person name="Hannibal L."/>
            <person name="Fardoux J."/>
            <person name="Kojadinovic M."/>
            <person name="Vuillet L."/>
            <person name="Lajus A."/>
            <person name="Cruveiller S."/>
            <person name="Rouy Z."/>
            <person name="Mangenot S."/>
            <person name="Segurens B."/>
            <person name="Dossat C."/>
            <person name="Franck W.L."/>
            <person name="Chang W.-S."/>
            <person name="Saunders E."/>
            <person name="Bruce D."/>
            <person name="Richardson P."/>
            <person name="Normand P."/>
            <person name="Dreyfus B."/>
            <person name="Pignol D."/>
            <person name="Stacey G."/>
            <person name="Emerich D."/>
            <person name="Vermeglio A."/>
            <person name="Medigue C."/>
            <person name="Sadowsky M."/>
        </authorList>
    </citation>
    <scope>NUCLEOTIDE SEQUENCE [LARGE SCALE GENOMIC DNA]</scope>
    <source>
        <strain>BTAi1 / ATCC BAA-1182</strain>
    </source>
</reference>
<dbReference type="EC" id="6.3.5.7" evidence="1"/>
<dbReference type="EMBL" id="CP000494">
    <property type="protein sequence ID" value="ABQ36738.1"/>
    <property type="molecule type" value="Genomic_DNA"/>
</dbReference>
<dbReference type="RefSeq" id="WP_012044724.1">
    <property type="nucleotide sequence ID" value="NC_009485.1"/>
</dbReference>
<dbReference type="SMR" id="A5EKP4"/>
<dbReference type="STRING" id="288000.BBta_4711"/>
<dbReference type="KEGG" id="bbt:BBta_4711"/>
<dbReference type="eggNOG" id="COG0154">
    <property type="taxonomic scope" value="Bacteria"/>
</dbReference>
<dbReference type="HOGENOM" id="CLU_009600_0_3_5"/>
<dbReference type="OrthoDB" id="9811471at2"/>
<dbReference type="Proteomes" id="UP000000246">
    <property type="component" value="Chromosome"/>
</dbReference>
<dbReference type="GO" id="GO:0030956">
    <property type="term" value="C:glutamyl-tRNA(Gln) amidotransferase complex"/>
    <property type="evidence" value="ECO:0007669"/>
    <property type="project" value="InterPro"/>
</dbReference>
<dbReference type="GO" id="GO:0005524">
    <property type="term" value="F:ATP binding"/>
    <property type="evidence" value="ECO:0007669"/>
    <property type="project" value="UniProtKB-KW"/>
</dbReference>
<dbReference type="GO" id="GO:0050567">
    <property type="term" value="F:glutaminyl-tRNA synthase (glutamine-hydrolyzing) activity"/>
    <property type="evidence" value="ECO:0007669"/>
    <property type="project" value="UniProtKB-UniRule"/>
</dbReference>
<dbReference type="GO" id="GO:0006412">
    <property type="term" value="P:translation"/>
    <property type="evidence" value="ECO:0007669"/>
    <property type="project" value="UniProtKB-UniRule"/>
</dbReference>
<dbReference type="Gene3D" id="3.90.1300.10">
    <property type="entry name" value="Amidase signature (AS) domain"/>
    <property type="match status" value="1"/>
</dbReference>
<dbReference type="HAMAP" id="MF_00120">
    <property type="entry name" value="GatA"/>
    <property type="match status" value="1"/>
</dbReference>
<dbReference type="InterPro" id="IPR000120">
    <property type="entry name" value="Amidase"/>
</dbReference>
<dbReference type="InterPro" id="IPR020556">
    <property type="entry name" value="Amidase_CS"/>
</dbReference>
<dbReference type="InterPro" id="IPR023631">
    <property type="entry name" value="Amidase_dom"/>
</dbReference>
<dbReference type="InterPro" id="IPR036928">
    <property type="entry name" value="AS_sf"/>
</dbReference>
<dbReference type="InterPro" id="IPR004412">
    <property type="entry name" value="GatA"/>
</dbReference>
<dbReference type="NCBIfam" id="TIGR00132">
    <property type="entry name" value="gatA"/>
    <property type="match status" value="1"/>
</dbReference>
<dbReference type="PANTHER" id="PTHR11895:SF151">
    <property type="entry name" value="GLUTAMYL-TRNA(GLN) AMIDOTRANSFERASE SUBUNIT A"/>
    <property type="match status" value="1"/>
</dbReference>
<dbReference type="PANTHER" id="PTHR11895">
    <property type="entry name" value="TRANSAMIDASE"/>
    <property type="match status" value="1"/>
</dbReference>
<dbReference type="Pfam" id="PF01425">
    <property type="entry name" value="Amidase"/>
    <property type="match status" value="1"/>
</dbReference>
<dbReference type="SUPFAM" id="SSF75304">
    <property type="entry name" value="Amidase signature (AS) enzymes"/>
    <property type="match status" value="1"/>
</dbReference>
<dbReference type="PROSITE" id="PS00571">
    <property type="entry name" value="AMIDASES"/>
    <property type="match status" value="1"/>
</dbReference>
<proteinExistence type="inferred from homology"/>
<keyword id="KW-0067">ATP-binding</keyword>
<keyword id="KW-0436">Ligase</keyword>
<keyword id="KW-0547">Nucleotide-binding</keyword>
<keyword id="KW-0648">Protein biosynthesis</keyword>
<keyword id="KW-1185">Reference proteome</keyword>
<gene>
    <name evidence="1" type="primary">gatA</name>
    <name type="ordered locus">BBta_4711</name>
</gene>
<evidence type="ECO:0000255" key="1">
    <source>
        <dbReference type="HAMAP-Rule" id="MF_00120"/>
    </source>
</evidence>
<sequence length="491" mass="52320">MTDLTSLTLAEARKGLASKTFTSLELTDAHLKAMEEARALNAFVMETPDQARAMAREADARIGKGEAGPLAGIPLGIKDLFATKDVRTTACSKILGNFVPTYESTVTSQLWRDGAVMLGKLNNDEFAMGSSNETSCFGPVGNPWRREGSNTTLVPGGSSGGSASAVAALLCMGATATDTGGSIRQPAAFTATVGIKPTYGRCSRWGIVAFASSLDQAGPIARSTRDAAILLRSMAGHDPKDTTSVDIPVPDYEAAIGRSVKGMKIGIPREYRLDGMPAEIEKLWSDGADWLKAAGAELVEVSLPHTKYALPAYYIVAPAEASSNLARYDGVRYGLRVSGKSIGELYENTRAEGFGPEVRRRVMIGTYVLSAGYYDAYYIRAQKVRTLIKRDFEDCFAKGVNAILTPATPSAAFGIGEKGGADPVEMYLNDIFTVTVNMAGLPGIAVPAGKDSQGLPLGLQLIGRPFDEETLFSLGEVIEQAAGRFTPVRWW</sequence>
<name>GATA_BRASB</name>
<comment type="function">
    <text evidence="1">Allows the formation of correctly charged Gln-tRNA(Gln) through the transamidation of misacylated Glu-tRNA(Gln) in organisms which lack glutaminyl-tRNA synthetase. The reaction takes place in the presence of glutamine and ATP through an activated gamma-phospho-Glu-tRNA(Gln).</text>
</comment>
<comment type="catalytic activity">
    <reaction evidence="1">
        <text>L-glutamyl-tRNA(Gln) + L-glutamine + ATP + H2O = L-glutaminyl-tRNA(Gln) + L-glutamate + ADP + phosphate + H(+)</text>
        <dbReference type="Rhea" id="RHEA:17521"/>
        <dbReference type="Rhea" id="RHEA-COMP:9681"/>
        <dbReference type="Rhea" id="RHEA-COMP:9684"/>
        <dbReference type="ChEBI" id="CHEBI:15377"/>
        <dbReference type="ChEBI" id="CHEBI:15378"/>
        <dbReference type="ChEBI" id="CHEBI:29985"/>
        <dbReference type="ChEBI" id="CHEBI:30616"/>
        <dbReference type="ChEBI" id="CHEBI:43474"/>
        <dbReference type="ChEBI" id="CHEBI:58359"/>
        <dbReference type="ChEBI" id="CHEBI:78520"/>
        <dbReference type="ChEBI" id="CHEBI:78521"/>
        <dbReference type="ChEBI" id="CHEBI:456216"/>
        <dbReference type="EC" id="6.3.5.7"/>
    </reaction>
</comment>
<comment type="subunit">
    <text evidence="1">Heterotrimer of A, B and C subunits.</text>
</comment>
<comment type="similarity">
    <text evidence="1">Belongs to the amidase family. GatA subfamily.</text>
</comment>
<feature type="chain" id="PRO_1000015802" description="Glutamyl-tRNA(Gln) amidotransferase subunit A">
    <location>
        <begin position="1"/>
        <end position="491"/>
    </location>
</feature>
<feature type="active site" description="Charge relay system" evidence="1">
    <location>
        <position position="78"/>
    </location>
</feature>
<feature type="active site" description="Charge relay system" evidence="1">
    <location>
        <position position="158"/>
    </location>
</feature>
<feature type="active site" description="Acyl-ester intermediate" evidence="1">
    <location>
        <position position="182"/>
    </location>
</feature>
<organism>
    <name type="scientific">Bradyrhizobium sp. (strain BTAi1 / ATCC BAA-1182)</name>
    <dbReference type="NCBI Taxonomy" id="288000"/>
    <lineage>
        <taxon>Bacteria</taxon>
        <taxon>Pseudomonadati</taxon>
        <taxon>Pseudomonadota</taxon>
        <taxon>Alphaproteobacteria</taxon>
        <taxon>Hyphomicrobiales</taxon>
        <taxon>Nitrobacteraceae</taxon>
        <taxon>Bradyrhizobium</taxon>
    </lineage>
</organism>
<accession>A5EKP4</accession>
<protein>
    <recommendedName>
        <fullName evidence="1">Glutamyl-tRNA(Gln) amidotransferase subunit A</fullName>
        <shortName evidence="1">Glu-ADT subunit A</shortName>
        <ecNumber evidence="1">6.3.5.7</ecNumber>
    </recommendedName>
</protein>